<protein>
    <recommendedName>
        <fullName evidence="1">Glucose-6-phosphate isomerase</fullName>
        <shortName evidence="1">GPI</shortName>
        <ecNumber evidence="1">5.3.1.9</ecNumber>
    </recommendedName>
    <alternativeName>
        <fullName evidence="1">Phosphoglucose isomerase</fullName>
        <shortName evidence="1">PGI</shortName>
    </alternativeName>
    <alternativeName>
        <fullName evidence="1">Phosphohexose isomerase</fullName>
        <shortName evidence="1">PHI</shortName>
    </alternativeName>
</protein>
<keyword id="KW-0963">Cytoplasm</keyword>
<keyword id="KW-0312">Gluconeogenesis</keyword>
<keyword id="KW-0324">Glycolysis</keyword>
<keyword id="KW-0413">Isomerase</keyword>
<proteinExistence type="inferred from homology"/>
<evidence type="ECO:0000255" key="1">
    <source>
        <dbReference type="HAMAP-Rule" id="MF_00473"/>
    </source>
</evidence>
<accession>Q0I3C7</accession>
<reference key="1">
    <citation type="journal article" date="2007" name="J. Bacteriol.">
        <title>Complete genome sequence of Haemophilus somnus (Histophilus somni) strain 129Pt and comparison to Haemophilus ducreyi 35000HP and Haemophilus influenzae Rd.</title>
        <authorList>
            <person name="Challacombe J.F."/>
            <person name="Duncan A.J."/>
            <person name="Brettin T.S."/>
            <person name="Bruce D."/>
            <person name="Chertkov O."/>
            <person name="Detter J.C."/>
            <person name="Han C.S."/>
            <person name="Misra M."/>
            <person name="Richardson P."/>
            <person name="Tapia R."/>
            <person name="Thayer N."/>
            <person name="Xie G."/>
            <person name="Inzana T.J."/>
        </authorList>
    </citation>
    <scope>NUCLEOTIDE SEQUENCE [LARGE SCALE GENOMIC DNA]</scope>
    <source>
        <strain>129Pt</strain>
    </source>
</reference>
<gene>
    <name evidence="1" type="primary">pgi</name>
    <name type="ordered locus">HS_0938</name>
</gene>
<dbReference type="EC" id="5.3.1.9" evidence="1"/>
<dbReference type="EMBL" id="CP000436">
    <property type="protein sequence ID" value="ABI25213.1"/>
    <property type="molecule type" value="Genomic_DNA"/>
</dbReference>
<dbReference type="SMR" id="Q0I3C7"/>
<dbReference type="KEGG" id="hso:HS_0938"/>
<dbReference type="eggNOG" id="COG0166">
    <property type="taxonomic scope" value="Bacteria"/>
</dbReference>
<dbReference type="HOGENOM" id="CLU_017947_3_1_6"/>
<dbReference type="UniPathway" id="UPA00109">
    <property type="reaction ID" value="UER00181"/>
</dbReference>
<dbReference type="UniPathway" id="UPA00138"/>
<dbReference type="GO" id="GO:0005829">
    <property type="term" value="C:cytosol"/>
    <property type="evidence" value="ECO:0007669"/>
    <property type="project" value="TreeGrafter"/>
</dbReference>
<dbReference type="GO" id="GO:0097367">
    <property type="term" value="F:carbohydrate derivative binding"/>
    <property type="evidence" value="ECO:0007669"/>
    <property type="project" value="InterPro"/>
</dbReference>
<dbReference type="GO" id="GO:0004347">
    <property type="term" value="F:glucose-6-phosphate isomerase activity"/>
    <property type="evidence" value="ECO:0007669"/>
    <property type="project" value="UniProtKB-UniRule"/>
</dbReference>
<dbReference type="GO" id="GO:0048029">
    <property type="term" value="F:monosaccharide binding"/>
    <property type="evidence" value="ECO:0007669"/>
    <property type="project" value="TreeGrafter"/>
</dbReference>
<dbReference type="GO" id="GO:0006094">
    <property type="term" value="P:gluconeogenesis"/>
    <property type="evidence" value="ECO:0007669"/>
    <property type="project" value="UniProtKB-UniRule"/>
</dbReference>
<dbReference type="GO" id="GO:0051156">
    <property type="term" value="P:glucose 6-phosphate metabolic process"/>
    <property type="evidence" value="ECO:0007669"/>
    <property type="project" value="TreeGrafter"/>
</dbReference>
<dbReference type="GO" id="GO:0006096">
    <property type="term" value="P:glycolytic process"/>
    <property type="evidence" value="ECO:0007669"/>
    <property type="project" value="UniProtKB-UniRule"/>
</dbReference>
<dbReference type="CDD" id="cd05015">
    <property type="entry name" value="SIS_PGI_1"/>
    <property type="match status" value="1"/>
</dbReference>
<dbReference type="CDD" id="cd05016">
    <property type="entry name" value="SIS_PGI_2"/>
    <property type="match status" value="1"/>
</dbReference>
<dbReference type="FunFam" id="1.10.1390.10:FF:000001">
    <property type="entry name" value="Glucose-6-phosphate isomerase"/>
    <property type="match status" value="1"/>
</dbReference>
<dbReference type="FunFam" id="3.40.50.10490:FF:000004">
    <property type="entry name" value="Glucose-6-phosphate isomerase"/>
    <property type="match status" value="1"/>
</dbReference>
<dbReference type="Gene3D" id="1.10.1390.10">
    <property type="match status" value="1"/>
</dbReference>
<dbReference type="Gene3D" id="3.40.50.10490">
    <property type="entry name" value="Glucose-6-phosphate isomerase like protein, domain 1"/>
    <property type="match status" value="2"/>
</dbReference>
<dbReference type="HAMAP" id="MF_00473">
    <property type="entry name" value="G6P_isomerase"/>
    <property type="match status" value="1"/>
</dbReference>
<dbReference type="InterPro" id="IPR001672">
    <property type="entry name" value="G6P_Isomerase"/>
</dbReference>
<dbReference type="InterPro" id="IPR023096">
    <property type="entry name" value="G6P_Isomerase_C"/>
</dbReference>
<dbReference type="InterPro" id="IPR018189">
    <property type="entry name" value="Phosphoglucose_isomerase_CS"/>
</dbReference>
<dbReference type="InterPro" id="IPR046348">
    <property type="entry name" value="SIS_dom_sf"/>
</dbReference>
<dbReference type="InterPro" id="IPR035476">
    <property type="entry name" value="SIS_PGI_1"/>
</dbReference>
<dbReference type="InterPro" id="IPR035482">
    <property type="entry name" value="SIS_PGI_2"/>
</dbReference>
<dbReference type="NCBIfam" id="NF001211">
    <property type="entry name" value="PRK00179.1"/>
    <property type="match status" value="1"/>
</dbReference>
<dbReference type="PANTHER" id="PTHR11469">
    <property type="entry name" value="GLUCOSE-6-PHOSPHATE ISOMERASE"/>
    <property type="match status" value="1"/>
</dbReference>
<dbReference type="PANTHER" id="PTHR11469:SF1">
    <property type="entry name" value="GLUCOSE-6-PHOSPHATE ISOMERASE"/>
    <property type="match status" value="1"/>
</dbReference>
<dbReference type="Pfam" id="PF00342">
    <property type="entry name" value="PGI"/>
    <property type="match status" value="1"/>
</dbReference>
<dbReference type="PRINTS" id="PR00662">
    <property type="entry name" value="G6PISOMERASE"/>
</dbReference>
<dbReference type="SUPFAM" id="SSF53697">
    <property type="entry name" value="SIS domain"/>
    <property type="match status" value="1"/>
</dbReference>
<dbReference type="PROSITE" id="PS00765">
    <property type="entry name" value="P_GLUCOSE_ISOMERASE_1"/>
    <property type="match status" value="1"/>
</dbReference>
<dbReference type="PROSITE" id="PS00174">
    <property type="entry name" value="P_GLUCOSE_ISOMERASE_2"/>
    <property type="match status" value="1"/>
</dbReference>
<dbReference type="PROSITE" id="PS51463">
    <property type="entry name" value="P_GLUCOSE_ISOMERASE_3"/>
    <property type="match status" value="1"/>
</dbReference>
<sequence length="549" mass="61575">MQNINPTQTNAWKALEQHQKDLDQVTIQQLFEQEPTRFNDYSLKFAEQILVDYSKNNINQQTLSLLRQLAKECALNEATEAMFNGEKINRTENRAVLHTALRSCANTPVYVDGKDVMPEVNAVLAKMKSFCQRVISGDWKGYTGKAITDVVNIGIGGSDLGPYMVTEALRPYKNHLTMHFVSNVDGTHIAETLKKVNPETTLFLVASKTFTTQETMTNAISARKWFLAAAQDESQIANHFAALSTNAKEVEKFGIDTNNMFEFWDWVGGRYSLWSAIGLSIALSIGFDNFEQLLAGAHEMDNHFRTAPMEQNIPATLALIGIWNCNFLGAETEAMLPYDQYLHRFAAYFQQGNMESNGKYVARNGEVINNYQTGPIIWGEPGTNGQHAFYQLIHQGTKIIPCDFIAPAQTHNPLSDHHSKLLSNFFAQTEALAFGKTQQEVEAEFVKAGKSLDEVKEIVPFKVFTGNKPTNSILVQKITPFTLGALIAMYEHKIFVQGVIFNIYSFDQWGVELGKQLANRILPELTGDESISSHDSSTNGLINQFKAWR</sequence>
<organism>
    <name type="scientific">Histophilus somni (strain 129Pt)</name>
    <name type="common">Haemophilus somnus</name>
    <dbReference type="NCBI Taxonomy" id="205914"/>
    <lineage>
        <taxon>Bacteria</taxon>
        <taxon>Pseudomonadati</taxon>
        <taxon>Pseudomonadota</taxon>
        <taxon>Gammaproteobacteria</taxon>
        <taxon>Pasteurellales</taxon>
        <taxon>Pasteurellaceae</taxon>
        <taxon>Histophilus</taxon>
    </lineage>
</organism>
<feature type="chain" id="PRO_1000013974" description="Glucose-6-phosphate isomerase">
    <location>
        <begin position="1"/>
        <end position="549"/>
    </location>
</feature>
<feature type="active site" description="Proton donor" evidence="1">
    <location>
        <position position="355"/>
    </location>
</feature>
<feature type="active site" evidence="1">
    <location>
        <position position="387"/>
    </location>
</feature>
<feature type="active site" evidence="1">
    <location>
        <position position="515"/>
    </location>
</feature>
<name>G6PI_HISS1</name>
<comment type="function">
    <text evidence="1">Catalyzes the reversible isomerization of glucose-6-phosphate to fructose-6-phosphate.</text>
</comment>
<comment type="catalytic activity">
    <reaction evidence="1">
        <text>alpha-D-glucose 6-phosphate = beta-D-fructose 6-phosphate</text>
        <dbReference type="Rhea" id="RHEA:11816"/>
        <dbReference type="ChEBI" id="CHEBI:57634"/>
        <dbReference type="ChEBI" id="CHEBI:58225"/>
        <dbReference type="EC" id="5.3.1.9"/>
    </reaction>
</comment>
<comment type="pathway">
    <text evidence="1">Carbohydrate biosynthesis; gluconeogenesis.</text>
</comment>
<comment type="pathway">
    <text evidence="1">Carbohydrate degradation; glycolysis; D-glyceraldehyde 3-phosphate and glycerone phosphate from D-glucose: step 2/4.</text>
</comment>
<comment type="subcellular location">
    <subcellularLocation>
        <location evidence="1">Cytoplasm</location>
    </subcellularLocation>
</comment>
<comment type="similarity">
    <text evidence="1">Belongs to the GPI family.</text>
</comment>